<comment type="function">
    <text evidence="1">ATP-dependent RNA helicase that binds to partially double-stranded RNAs (dsRNAs) in order to unwind RNA secondary structures. Unwinding is promoted in the presence of single-strand binding proteins. Also mediates RNA duplex formation thereby displacing the single-strand RNA binding protein. ATP and ADP modulate its activity: ATP binding and hydrolysis by DDX42 triggers RNA strand separation, whereas the ADP-bound form of the protein triggers annealing of complementary RNA strands. Required for assembly of the 17S U2 SnRNP complex of the spliceosome, a large ribonucleoprotein complex that removes introns from transcribed pre-mRNAs: DDX42 associates transiently with the SF3B subcomplex of the 17S U2 SnRNP complex and is released after fulfilling its role in the assembly of 17S U2 SnRNP.</text>
</comment>
<comment type="catalytic activity">
    <reaction evidence="1">
        <text>ATP + H2O = ADP + phosphate + H(+)</text>
        <dbReference type="Rhea" id="RHEA:13065"/>
        <dbReference type="ChEBI" id="CHEBI:15377"/>
        <dbReference type="ChEBI" id="CHEBI:15378"/>
        <dbReference type="ChEBI" id="CHEBI:30616"/>
        <dbReference type="ChEBI" id="CHEBI:43474"/>
        <dbReference type="ChEBI" id="CHEBI:456216"/>
        <dbReference type="EC" id="3.6.4.13"/>
    </reaction>
</comment>
<comment type="subunit">
    <text evidence="1">Transient component of the SF3B subcomplex of the 17S U2 SnRNP complex.</text>
</comment>
<comment type="subcellular location">
    <subcellularLocation>
        <location evidence="1">Cytoplasm</location>
    </subcellularLocation>
    <subcellularLocation>
        <location evidence="1">Nucleus</location>
    </subcellularLocation>
</comment>
<comment type="similarity">
    <text evidence="6">Belongs to the DEAD box helicase family. DDX42 subfamily.</text>
</comment>
<protein>
    <recommendedName>
        <fullName>ATP-dependent RNA helicase DDX42</fullName>
        <ecNumber evidence="1">3.6.4.13</ecNumber>
    </recommendedName>
    <alternativeName>
        <fullName>DEAD box protein 42</fullName>
    </alternativeName>
</protein>
<feature type="chain" id="PRO_0000280062" description="ATP-dependent RNA helicase DDX42">
    <location>
        <begin position="1"/>
        <end position="947"/>
    </location>
</feature>
<feature type="domain" description="Helicase ATP-binding" evidence="3">
    <location>
        <begin position="281"/>
        <end position="456"/>
    </location>
</feature>
<feature type="domain" description="Helicase C-terminal" evidence="4">
    <location>
        <begin position="484"/>
        <end position="629"/>
    </location>
</feature>
<feature type="region of interest" description="Disordered" evidence="5">
    <location>
        <begin position="1"/>
        <end position="54"/>
    </location>
</feature>
<feature type="region of interest" description="Disordered" evidence="5">
    <location>
        <begin position="68"/>
        <end position="114"/>
    </location>
</feature>
<feature type="region of interest" description="Disordered" evidence="5">
    <location>
        <begin position="176"/>
        <end position="200"/>
    </location>
</feature>
<feature type="region of interest" description="Disordered" evidence="5">
    <location>
        <begin position="731"/>
        <end position="754"/>
    </location>
</feature>
<feature type="region of interest" description="Disordered" evidence="5">
    <location>
        <begin position="797"/>
        <end position="947"/>
    </location>
</feature>
<feature type="coiled-coil region" evidence="2">
    <location>
        <begin position="112"/>
        <end position="152"/>
    </location>
</feature>
<feature type="short sequence motif" description="Q motif">
    <location>
        <begin position="250"/>
        <end position="278"/>
    </location>
</feature>
<feature type="short sequence motif" description="DEAD box">
    <location>
        <begin position="404"/>
        <end position="407"/>
    </location>
</feature>
<feature type="compositionally biased region" description="Gly residues" evidence="5">
    <location>
        <begin position="1"/>
        <end position="18"/>
    </location>
</feature>
<feature type="compositionally biased region" description="Polar residues" evidence="5">
    <location>
        <begin position="34"/>
        <end position="54"/>
    </location>
</feature>
<feature type="compositionally biased region" description="Acidic residues" evidence="5">
    <location>
        <begin position="68"/>
        <end position="81"/>
    </location>
</feature>
<feature type="compositionally biased region" description="Basic and acidic residues" evidence="5">
    <location>
        <begin position="805"/>
        <end position="929"/>
    </location>
</feature>
<feature type="compositionally biased region" description="Basic residues" evidence="5">
    <location>
        <begin position="938"/>
        <end position="947"/>
    </location>
</feature>
<feature type="binding site" evidence="3">
    <location>
        <begin position="294"/>
        <end position="301"/>
    </location>
    <ligand>
        <name>ATP</name>
        <dbReference type="ChEBI" id="CHEBI:30616"/>
    </ligand>
</feature>
<accession>Q7ZY47</accession>
<dbReference type="EC" id="3.6.4.13" evidence="1"/>
<dbReference type="EMBL" id="BC043977">
    <property type="protein sequence ID" value="AAH43977.1"/>
    <property type="molecule type" value="mRNA"/>
</dbReference>
<dbReference type="RefSeq" id="NP_001080569.1">
    <property type="nucleotide sequence ID" value="NM_001087100.1"/>
</dbReference>
<dbReference type="SMR" id="Q7ZY47"/>
<dbReference type="BioGRID" id="98503">
    <property type="interactions" value="1"/>
</dbReference>
<dbReference type="IntAct" id="Q7ZY47">
    <property type="interactions" value="1"/>
</dbReference>
<dbReference type="DNASU" id="380261"/>
<dbReference type="GeneID" id="380261"/>
<dbReference type="KEGG" id="xla:380261"/>
<dbReference type="AGR" id="Xenbase:XB-GENE-972673"/>
<dbReference type="CTD" id="380261"/>
<dbReference type="Xenbase" id="XB-GENE-972673">
    <property type="gene designation" value="ddx42.L"/>
</dbReference>
<dbReference type="OrthoDB" id="196131at2759"/>
<dbReference type="Proteomes" id="UP000186698">
    <property type="component" value="Chromosome 9_10L"/>
</dbReference>
<dbReference type="Bgee" id="380261">
    <property type="expression patterns" value="Expressed in brain and 19 other cell types or tissues"/>
</dbReference>
<dbReference type="GO" id="GO:0005737">
    <property type="term" value="C:cytoplasm"/>
    <property type="evidence" value="ECO:0007669"/>
    <property type="project" value="UniProtKB-SubCell"/>
</dbReference>
<dbReference type="GO" id="GO:0071004">
    <property type="term" value="C:U2-type prespliceosome"/>
    <property type="evidence" value="ECO:0000250"/>
    <property type="project" value="UniProtKB"/>
</dbReference>
<dbReference type="GO" id="GO:0005524">
    <property type="term" value="F:ATP binding"/>
    <property type="evidence" value="ECO:0007669"/>
    <property type="project" value="UniProtKB-KW"/>
</dbReference>
<dbReference type="GO" id="GO:0016887">
    <property type="term" value="F:ATP hydrolysis activity"/>
    <property type="evidence" value="ECO:0007669"/>
    <property type="project" value="RHEA"/>
</dbReference>
<dbReference type="GO" id="GO:0003729">
    <property type="term" value="F:mRNA binding"/>
    <property type="evidence" value="ECO:0000318"/>
    <property type="project" value="GO_Central"/>
</dbReference>
<dbReference type="GO" id="GO:0003724">
    <property type="term" value="F:RNA helicase activity"/>
    <property type="evidence" value="ECO:0000318"/>
    <property type="project" value="GO_Central"/>
</dbReference>
<dbReference type="GO" id="GO:1903241">
    <property type="term" value="P:U2-type prespliceosome assembly"/>
    <property type="evidence" value="ECO:0000250"/>
    <property type="project" value="UniProtKB"/>
</dbReference>
<dbReference type="CDD" id="cd17952">
    <property type="entry name" value="DEADc_DDX42"/>
    <property type="match status" value="1"/>
</dbReference>
<dbReference type="CDD" id="cd18787">
    <property type="entry name" value="SF2_C_DEAD"/>
    <property type="match status" value="1"/>
</dbReference>
<dbReference type="FunFam" id="3.40.50.300:FF:000524">
    <property type="entry name" value="ATP-dependent RNA helicase DDX42"/>
    <property type="match status" value="1"/>
</dbReference>
<dbReference type="FunFam" id="3.40.50.300:FF:000079">
    <property type="entry name" value="probable ATP-dependent RNA helicase DDX17"/>
    <property type="match status" value="1"/>
</dbReference>
<dbReference type="Gene3D" id="3.40.50.300">
    <property type="entry name" value="P-loop containing nucleotide triphosphate hydrolases"/>
    <property type="match status" value="2"/>
</dbReference>
<dbReference type="InterPro" id="IPR011545">
    <property type="entry name" value="DEAD/DEAH_box_helicase_dom"/>
</dbReference>
<dbReference type="InterPro" id="IPR014001">
    <property type="entry name" value="Helicase_ATP-bd"/>
</dbReference>
<dbReference type="InterPro" id="IPR001650">
    <property type="entry name" value="Helicase_C-like"/>
</dbReference>
<dbReference type="InterPro" id="IPR027417">
    <property type="entry name" value="P-loop_NTPase"/>
</dbReference>
<dbReference type="InterPro" id="IPR000629">
    <property type="entry name" value="RNA-helicase_DEAD-box_CS"/>
</dbReference>
<dbReference type="InterPro" id="IPR014014">
    <property type="entry name" value="RNA_helicase_DEAD_Q_motif"/>
</dbReference>
<dbReference type="PANTHER" id="PTHR47958">
    <property type="entry name" value="ATP-DEPENDENT RNA HELICASE DBP3"/>
    <property type="match status" value="1"/>
</dbReference>
<dbReference type="Pfam" id="PF00270">
    <property type="entry name" value="DEAD"/>
    <property type="match status" value="1"/>
</dbReference>
<dbReference type="Pfam" id="PF00271">
    <property type="entry name" value="Helicase_C"/>
    <property type="match status" value="1"/>
</dbReference>
<dbReference type="SMART" id="SM00487">
    <property type="entry name" value="DEXDc"/>
    <property type="match status" value="1"/>
</dbReference>
<dbReference type="SMART" id="SM00490">
    <property type="entry name" value="HELICc"/>
    <property type="match status" value="1"/>
</dbReference>
<dbReference type="SUPFAM" id="SSF52540">
    <property type="entry name" value="P-loop containing nucleoside triphosphate hydrolases"/>
    <property type="match status" value="2"/>
</dbReference>
<dbReference type="PROSITE" id="PS00039">
    <property type="entry name" value="DEAD_ATP_HELICASE"/>
    <property type="match status" value="1"/>
</dbReference>
<dbReference type="PROSITE" id="PS51192">
    <property type="entry name" value="HELICASE_ATP_BIND_1"/>
    <property type="match status" value="1"/>
</dbReference>
<dbReference type="PROSITE" id="PS51194">
    <property type="entry name" value="HELICASE_CTER"/>
    <property type="match status" value="1"/>
</dbReference>
<dbReference type="PROSITE" id="PS51195">
    <property type="entry name" value="Q_MOTIF"/>
    <property type="match status" value="1"/>
</dbReference>
<keyword id="KW-0067">ATP-binding</keyword>
<keyword id="KW-0175">Coiled coil</keyword>
<keyword id="KW-0963">Cytoplasm</keyword>
<keyword id="KW-0347">Helicase</keyword>
<keyword id="KW-0378">Hydrolase</keyword>
<keyword id="KW-0547">Nucleotide-binding</keyword>
<keyword id="KW-0539">Nucleus</keyword>
<keyword id="KW-1185">Reference proteome</keyword>
<keyword id="KW-0694">RNA-binding</keyword>
<reference key="1">
    <citation type="submission" date="2003-01" db="EMBL/GenBank/DDBJ databases">
        <authorList>
            <consortium name="NIH - Xenopus Gene Collection (XGC) project"/>
        </authorList>
    </citation>
    <scope>NUCLEOTIDE SEQUENCE [LARGE SCALE MRNA]</scope>
    <source>
        <tissue>Embryo</tissue>
    </source>
</reference>
<evidence type="ECO:0000250" key="1">
    <source>
        <dbReference type="UniProtKB" id="Q86XP3"/>
    </source>
</evidence>
<evidence type="ECO:0000255" key="2"/>
<evidence type="ECO:0000255" key="3">
    <source>
        <dbReference type="PROSITE-ProRule" id="PRU00541"/>
    </source>
</evidence>
<evidence type="ECO:0000255" key="4">
    <source>
        <dbReference type="PROSITE-ProRule" id="PRU00542"/>
    </source>
</evidence>
<evidence type="ECO:0000256" key="5">
    <source>
        <dbReference type="SAM" id="MobiDB-lite"/>
    </source>
</evidence>
<evidence type="ECO:0000305" key="6"/>
<proteinExistence type="evidence at transcript level"/>
<sequence length="947" mass="104079">MNWNKGGSGNKRGFGFGGFAISTGKKEEPKLPQVSHSAFQSASSKYGSTSNQLPSFYKIGSKRANFDEENSYFDDEEEDSSNVDLPYIPAENSPTRQQLRSKTDSDSEEDPLEAFMAEVEDQAAKDMRKLEERDKEKANARGIRDDIEEEDDQEAYFRYMAENPTAGLVPEEEEDNLEYDSDGNPIAPTTKRIIDPLPPIDHTEIEYPPFEKNFYEEHEAITSQTPQQITELRHKLNLRVSGAAPPRLCSSFAHFGFDEQLLHQIRKSEYTQPTPIQCQGIPVALSGRDMIGIAKTGSGKTAAFIWPILVHIMDQKELQPADGPIAVIVCPTRELCQQIHSECKRFGKAYNLRSVAVYGGGSMWEQAKALQEGAEIVVCTPGRLIDHVKKKATNLQRVTYLVFDEADRMFDMGFEYQVRSIANHVRPDRQTLLFSATFRKKIEKLARDILVDPIRVVQGDIGEANEDITQVVEILPSGPEKWTWLTRRLVEFTSTGSVLVFVTKKANAEELAANLRQDDHPLGLLHGDMDQSERNKVISDFKKKSIPVLVATDVAARGLDIPSIKTVVNYDVARDIDTHTHRIGRTGRAGEKGVAYTLLTSKESNFAGDLVRNLEGANQYVSKELLDLAMQNSWFRKSRFKAGKGKKLNIGGGGLGYRERPGLGAESSEHGTGGNVMSNYEAFKPSGGAMGDRLSAMKSAFQSQYKNHFVAASASTQKTGTSSINSGAWTSAGSLSSVPSAHPPSGKLPAEAAPPPVHTAMLGFTSSGTLSSIPTGYPANISSASYPAATLFGARDGASAGTESGGRERHSDSKGRHGDSHRPSDREGYRHGDGHRHSSSSRHGERNGGEGRRESSRDGRRDSSRDGESRRDGSRDGGEGRRESSRDGEGRRESSRDGDGRRESSGDGRREVVGDDGDSRKEGTREAKTDTFAIPVPPKRKKSRWDS</sequence>
<organism>
    <name type="scientific">Xenopus laevis</name>
    <name type="common">African clawed frog</name>
    <dbReference type="NCBI Taxonomy" id="8355"/>
    <lineage>
        <taxon>Eukaryota</taxon>
        <taxon>Metazoa</taxon>
        <taxon>Chordata</taxon>
        <taxon>Craniata</taxon>
        <taxon>Vertebrata</taxon>
        <taxon>Euteleostomi</taxon>
        <taxon>Amphibia</taxon>
        <taxon>Batrachia</taxon>
        <taxon>Anura</taxon>
        <taxon>Pipoidea</taxon>
        <taxon>Pipidae</taxon>
        <taxon>Xenopodinae</taxon>
        <taxon>Xenopus</taxon>
        <taxon>Xenopus</taxon>
    </lineage>
</organism>
<gene>
    <name type="primary">ddx42</name>
</gene>
<name>DDX42_XENLA</name>